<organism>
    <name type="scientific">Shewanella piezotolerans (strain WP3 / JCM 13877)</name>
    <dbReference type="NCBI Taxonomy" id="225849"/>
    <lineage>
        <taxon>Bacteria</taxon>
        <taxon>Pseudomonadati</taxon>
        <taxon>Pseudomonadota</taxon>
        <taxon>Gammaproteobacteria</taxon>
        <taxon>Alteromonadales</taxon>
        <taxon>Shewanellaceae</taxon>
        <taxon>Shewanella</taxon>
    </lineage>
</organism>
<reference key="1">
    <citation type="journal article" date="2008" name="PLoS ONE">
        <title>Environmental adaptation: genomic analysis of the piezotolerant and psychrotolerant deep-sea iron reducing bacterium Shewanella piezotolerans WP3.</title>
        <authorList>
            <person name="Wang F."/>
            <person name="Wang J."/>
            <person name="Jian H."/>
            <person name="Zhang B."/>
            <person name="Li S."/>
            <person name="Wang F."/>
            <person name="Zeng X."/>
            <person name="Gao L."/>
            <person name="Bartlett D.H."/>
            <person name="Yu J."/>
            <person name="Hu S."/>
            <person name="Xiao X."/>
        </authorList>
    </citation>
    <scope>NUCLEOTIDE SEQUENCE [LARGE SCALE GENOMIC DNA]</scope>
    <source>
        <strain>WP3 / JCM 13877</strain>
    </source>
</reference>
<keyword id="KW-0001">2Fe-2S</keyword>
<keyword id="KW-0004">4Fe-4S</keyword>
<keyword id="KW-0093">Biotin biosynthesis</keyword>
<keyword id="KW-0408">Iron</keyword>
<keyword id="KW-0411">Iron-sulfur</keyword>
<keyword id="KW-0479">Metal-binding</keyword>
<keyword id="KW-0949">S-adenosyl-L-methionine</keyword>
<keyword id="KW-0808">Transferase</keyword>
<dbReference type="EC" id="2.8.1.6" evidence="1"/>
<dbReference type="EMBL" id="CP000472">
    <property type="protein sequence ID" value="ACJ29654.1"/>
    <property type="molecule type" value="Genomic_DNA"/>
</dbReference>
<dbReference type="RefSeq" id="WP_020913008.1">
    <property type="nucleotide sequence ID" value="NC_011566.1"/>
</dbReference>
<dbReference type="SMR" id="B8CQY2"/>
<dbReference type="STRING" id="225849.swp_2928"/>
<dbReference type="KEGG" id="swp:swp_2928"/>
<dbReference type="eggNOG" id="COG0502">
    <property type="taxonomic scope" value="Bacteria"/>
</dbReference>
<dbReference type="HOGENOM" id="CLU_033172_1_2_6"/>
<dbReference type="OrthoDB" id="9786826at2"/>
<dbReference type="UniPathway" id="UPA00078">
    <property type="reaction ID" value="UER00162"/>
</dbReference>
<dbReference type="Proteomes" id="UP000000753">
    <property type="component" value="Chromosome"/>
</dbReference>
<dbReference type="GO" id="GO:0051537">
    <property type="term" value="F:2 iron, 2 sulfur cluster binding"/>
    <property type="evidence" value="ECO:0007669"/>
    <property type="project" value="UniProtKB-KW"/>
</dbReference>
<dbReference type="GO" id="GO:0051539">
    <property type="term" value="F:4 iron, 4 sulfur cluster binding"/>
    <property type="evidence" value="ECO:0007669"/>
    <property type="project" value="UniProtKB-KW"/>
</dbReference>
<dbReference type="GO" id="GO:0004076">
    <property type="term" value="F:biotin synthase activity"/>
    <property type="evidence" value="ECO:0007669"/>
    <property type="project" value="UniProtKB-UniRule"/>
</dbReference>
<dbReference type="GO" id="GO:0005506">
    <property type="term" value="F:iron ion binding"/>
    <property type="evidence" value="ECO:0007669"/>
    <property type="project" value="UniProtKB-UniRule"/>
</dbReference>
<dbReference type="GO" id="GO:0009102">
    <property type="term" value="P:biotin biosynthetic process"/>
    <property type="evidence" value="ECO:0007669"/>
    <property type="project" value="UniProtKB-UniRule"/>
</dbReference>
<dbReference type="CDD" id="cd01335">
    <property type="entry name" value="Radical_SAM"/>
    <property type="match status" value="1"/>
</dbReference>
<dbReference type="FunFam" id="3.20.20.70:FF:000011">
    <property type="entry name" value="Biotin synthase"/>
    <property type="match status" value="1"/>
</dbReference>
<dbReference type="Gene3D" id="3.20.20.70">
    <property type="entry name" value="Aldolase class I"/>
    <property type="match status" value="1"/>
</dbReference>
<dbReference type="HAMAP" id="MF_01694">
    <property type="entry name" value="BioB"/>
    <property type="match status" value="1"/>
</dbReference>
<dbReference type="InterPro" id="IPR013785">
    <property type="entry name" value="Aldolase_TIM"/>
</dbReference>
<dbReference type="InterPro" id="IPR010722">
    <property type="entry name" value="BATS_dom"/>
</dbReference>
<dbReference type="InterPro" id="IPR002684">
    <property type="entry name" value="Biotin_synth/BioAB"/>
</dbReference>
<dbReference type="InterPro" id="IPR024177">
    <property type="entry name" value="Biotin_synthase"/>
</dbReference>
<dbReference type="InterPro" id="IPR006638">
    <property type="entry name" value="Elp3/MiaA/NifB-like_rSAM"/>
</dbReference>
<dbReference type="InterPro" id="IPR007197">
    <property type="entry name" value="rSAM"/>
</dbReference>
<dbReference type="NCBIfam" id="TIGR00433">
    <property type="entry name" value="bioB"/>
    <property type="match status" value="1"/>
</dbReference>
<dbReference type="PANTHER" id="PTHR22976">
    <property type="entry name" value="BIOTIN SYNTHASE"/>
    <property type="match status" value="1"/>
</dbReference>
<dbReference type="PANTHER" id="PTHR22976:SF2">
    <property type="entry name" value="BIOTIN SYNTHASE, MITOCHONDRIAL"/>
    <property type="match status" value="1"/>
</dbReference>
<dbReference type="Pfam" id="PF06968">
    <property type="entry name" value="BATS"/>
    <property type="match status" value="1"/>
</dbReference>
<dbReference type="Pfam" id="PF04055">
    <property type="entry name" value="Radical_SAM"/>
    <property type="match status" value="1"/>
</dbReference>
<dbReference type="PIRSF" id="PIRSF001619">
    <property type="entry name" value="Biotin_synth"/>
    <property type="match status" value="1"/>
</dbReference>
<dbReference type="SFLD" id="SFLDG01060">
    <property type="entry name" value="BATS_domain_containing"/>
    <property type="match status" value="1"/>
</dbReference>
<dbReference type="SFLD" id="SFLDF00272">
    <property type="entry name" value="biotin_synthase"/>
    <property type="match status" value="1"/>
</dbReference>
<dbReference type="SMART" id="SM00876">
    <property type="entry name" value="BATS"/>
    <property type="match status" value="1"/>
</dbReference>
<dbReference type="SMART" id="SM00729">
    <property type="entry name" value="Elp3"/>
    <property type="match status" value="1"/>
</dbReference>
<dbReference type="SUPFAM" id="SSF102114">
    <property type="entry name" value="Radical SAM enzymes"/>
    <property type="match status" value="1"/>
</dbReference>
<dbReference type="PROSITE" id="PS51918">
    <property type="entry name" value="RADICAL_SAM"/>
    <property type="match status" value="1"/>
</dbReference>
<protein>
    <recommendedName>
        <fullName evidence="1">Biotin synthase</fullName>
        <ecNumber evidence="1">2.8.1.6</ecNumber>
    </recommendedName>
</protein>
<evidence type="ECO:0000255" key="1">
    <source>
        <dbReference type="HAMAP-Rule" id="MF_01694"/>
    </source>
</evidence>
<evidence type="ECO:0000255" key="2">
    <source>
        <dbReference type="PROSITE-ProRule" id="PRU01266"/>
    </source>
</evidence>
<comment type="function">
    <text evidence="1">Catalyzes the conversion of dethiobiotin (DTB) to biotin by the insertion of a sulfur atom into dethiobiotin via a radical-based mechanism.</text>
</comment>
<comment type="catalytic activity">
    <reaction evidence="1">
        <text>(4R,5S)-dethiobiotin + (sulfur carrier)-SH + 2 reduced [2Fe-2S]-[ferredoxin] + 2 S-adenosyl-L-methionine = (sulfur carrier)-H + biotin + 2 5'-deoxyadenosine + 2 L-methionine + 2 oxidized [2Fe-2S]-[ferredoxin]</text>
        <dbReference type="Rhea" id="RHEA:22060"/>
        <dbReference type="Rhea" id="RHEA-COMP:10000"/>
        <dbReference type="Rhea" id="RHEA-COMP:10001"/>
        <dbReference type="Rhea" id="RHEA-COMP:14737"/>
        <dbReference type="Rhea" id="RHEA-COMP:14739"/>
        <dbReference type="ChEBI" id="CHEBI:17319"/>
        <dbReference type="ChEBI" id="CHEBI:29917"/>
        <dbReference type="ChEBI" id="CHEBI:33737"/>
        <dbReference type="ChEBI" id="CHEBI:33738"/>
        <dbReference type="ChEBI" id="CHEBI:57586"/>
        <dbReference type="ChEBI" id="CHEBI:57844"/>
        <dbReference type="ChEBI" id="CHEBI:59789"/>
        <dbReference type="ChEBI" id="CHEBI:64428"/>
        <dbReference type="ChEBI" id="CHEBI:149473"/>
        <dbReference type="EC" id="2.8.1.6"/>
    </reaction>
</comment>
<comment type="cofactor">
    <cofactor evidence="1">
        <name>[4Fe-4S] cluster</name>
        <dbReference type="ChEBI" id="CHEBI:49883"/>
    </cofactor>
    <text evidence="1">Binds 1 [4Fe-4S] cluster. The cluster is coordinated with 3 cysteines and an exchangeable S-adenosyl-L-methionine.</text>
</comment>
<comment type="cofactor">
    <cofactor evidence="1">
        <name>[2Fe-2S] cluster</name>
        <dbReference type="ChEBI" id="CHEBI:190135"/>
    </cofactor>
    <text evidence="1">Binds 1 [2Fe-2S] cluster. The cluster is coordinated with 3 cysteines and 1 arginine.</text>
</comment>
<comment type="pathway">
    <text evidence="1">Cofactor biosynthesis; biotin biosynthesis; biotin from 7,8-diaminononanoate: step 2/2.</text>
</comment>
<comment type="subunit">
    <text evidence="1">Homodimer.</text>
</comment>
<comment type="similarity">
    <text evidence="1">Belongs to the radical SAM superfamily. Biotin synthase family.</text>
</comment>
<sequence length="350" mass="38889">MSDVQVRNNWKRDEIETLFALPMNDLLFQAHSVHRQEFDPNEVQISRLLSIKTGACPEDCKYCPQSARYDTGLEKERLLAMETVLTEARSAKAAGASRFCMGAAWRNPKERDMPYLKTMVEEVKSLGMETCMTLGMLSADQASELADAGLDYYNHNLDTSPEYYGDVITTRTYQNRLDTLSNVRASGMKVCSGGIVGMGEKATDRAGLLQQLANLDKHPDSVPINMLVKVEGTPFEKIDDLDPLEFVRTIAVARIIMPKSRVRLSAGRENMTDELQAMCFFAGANSIFYGCKLLTTPNPEENDDMSLFRRLGLHPEQGIAATKEQDEAMLAKAAAQQDKKASAFYDAGAL</sequence>
<proteinExistence type="inferred from homology"/>
<accession>B8CQY2</accession>
<name>BIOB_SHEPW</name>
<feature type="chain" id="PRO_0000381624" description="Biotin synthase">
    <location>
        <begin position="1"/>
        <end position="350"/>
    </location>
</feature>
<feature type="domain" description="Radical SAM core" evidence="2">
    <location>
        <begin position="41"/>
        <end position="268"/>
    </location>
</feature>
<feature type="binding site" evidence="1">
    <location>
        <position position="56"/>
    </location>
    <ligand>
        <name>[4Fe-4S] cluster</name>
        <dbReference type="ChEBI" id="CHEBI:49883"/>
        <note>4Fe-4S-S-AdoMet</note>
    </ligand>
</feature>
<feature type="binding site" evidence="1">
    <location>
        <position position="60"/>
    </location>
    <ligand>
        <name>[4Fe-4S] cluster</name>
        <dbReference type="ChEBI" id="CHEBI:49883"/>
        <note>4Fe-4S-S-AdoMet</note>
    </ligand>
</feature>
<feature type="binding site" evidence="1">
    <location>
        <position position="63"/>
    </location>
    <ligand>
        <name>[4Fe-4S] cluster</name>
        <dbReference type="ChEBI" id="CHEBI:49883"/>
        <note>4Fe-4S-S-AdoMet</note>
    </ligand>
</feature>
<feature type="binding site" evidence="1">
    <location>
        <position position="100"/>
    </location>
    <ligand>
        <name>[2Fe-2S] cluster</name>
        <dbReference type="ChEBI" id="CHEBI:190135"/>
    </ligand>
</feature>
<feature type="binding site" evidence="1">
    <location>
        <position position="131"/>
    </location>
    <ligand>
        <name>[2Fe-2S] cluster</name>
        <dbReference type="ChEBI" id="CHEBI:190135"/>
    </ligand>
</feature>
<feature type="binding site" evidence="1">
    <location>
        <position position="191"/>
    </location>
    <ligand>
        <name>[2Fe-2S] cluster</name>
        <dbReference type="ChEBI" id="CHEBI:190135"/>
    </ligand>
</feature>
<feature type="binding site" evidence="1">
    <location>
        <position position="263"/>
    </location>
    <ligand>
        <name>[2Fe-2S] cluster</name>
        <dbReference type="ChEBI" id="CHEBI:190135"/>
    </ligand>
</feature>
<gene>
    <name evidence="1" type="primary">bioB</name>
    <name type="ordered locus">swp_2928</name>
</gene>